<dbReference type="EC" id="2.8.1.8" evidence="1"/>
<dbReference type="EMBL" id="CP001298">
    <property type="protein sequence ID" value="ACK83865.1"/>
    <property type="molecule type" value="Genomic_DNA"/>
</dbReference>
<dbReference type="RefSeq" id="WP_003597435.1">
    <property type="nucleotide sequence ID" value="NC_011757.1"/>
</dbReference>
<dbReference type="SMR" id="B7KRC9"/>
<dbReference type="GeneID" id="72990448"/>
<dbReference type="KEGG" id="mch:Mchl_3027"/>
<dbReference type="HOGENOM" id="CLU_033144_2_1_5"/>
<dbReference type="UniPathway" id="UPA00538">
    <property type="reaction ID" value="UER00593"/>
</dbReference>
<dbReference type="Proteomes" id="UP000002385">
    <property type="component" value="Chromosome"/>
</dbReference>
<dbReference type="GO" id="GO:0005737">
    <property type="term" value="C:cytoplasm"/>
    <property type="evidence" value="ECO:0007669"/>
    <property type="project" value="UniProtKB-SubCell"/>
</dbReference>
<dbReference type="GO" id="GO:0051539">
    <property type="term" value="F:4 iron, 4 sulfur cluster binding"/>
    <property type="evidence" value="ECO:0007669"/>
    <property type="project" value="UniProtKB-UniRule"/>
</dbReference>
<dbReference type="GO" id="GO:0016992">
    <property type="term" value="F:lipoate synthase activity"/>
    <property type="evidence" value="ECO:0007669"/>
    <property type="project" value="UniProtKB-UniRule"/>
</dbReference>
<dbReference type="GO" id="GO:0046872">
    <property type="term" value="F:metal ion binding"/>
    <property type="evidence" value="ECO:0007669"/>
    <property type="project" value="UniProtKB-KW"/>
</dbReference>
<dbReference type="CDD" id="cd01335">
    <property type="entry name" value="Radical_SAM"/>
    <property type="match status" value="1"/>
</dbReference>
<dbReference type="FunFam" id="3.20.20.70:FF:000186">
    <property type="entry name" value="Lipoyl synthase"/>
    <property type="match status" value="1"/>
</dbReference>
<dbReference type="Gene3D" id="3.20.20.70">
    <property type="entry name" value="Aldolase class I"/>
    <property type="match status" value="1"/>
</dbReference>
<dbReference type="HAMAP" id="MF_00206">
    <property type="entry name" value="Lipoyl_synth"/>
    <property type="match status" value="1"/>
</dbReference>
<dbReference type="InterPro" id="IPR013785">
    <property type="entry name" value="Aldolase_TIM"/>
</dbReference>
<dbReference type="InterPro" id="IPR006638">
    <property type="entry name" value="Elp3/MiaA/NifB-like_rSAM"/>
</dbReference>
<dbReference type="InterPro" id="IPR003698">
    <property type="entry name" value="Lipoyl_synth"/>
</dbReference>
<dbReference type="InterPro" id="IPR007197">
    <property type="entry name" value="rSAM"/>
</dbReference>
<dbReference type="NCBIfam" id="TIGR00510">
    <property type="entry name" value="lipA"/>
    <property type="match status" value="1"/>
</dbReference>
<dbReference type="NCBIfam" id="NF004019">
    <property type="entry name" value="PRK05481.1"/>
    <property type="match status" value="1"/>
</dbReference>
<dbReference type="NCBIfam" id="NF009544">
    <property type="entry name" value="PRK12928.1"/>
    <property type="match status" value="1"/>
</dbReference>
<dbReference type="PANTHER" id="PTHR10949">
    <property type="entry name" value="LIPOYL SYNTHASE"/>
    <property type="match status" value="1"/>
</dbReference>
<dbReference type="PANTHER" id="PTHR10949:SF0">
    <property type="entry name" value="LIPOYL SYNTHASE, MITOCHONDRIAL"/>
    <property type="match status" value="1"/>
</dbReference>
<dbReference type="Pfam" id="PF04055">
    <property type="entry name" value="Radical_SAM"/>
    <property type="match status" value="1"/>
</dbReference>
<dbReference type="PIRSF" id="PIRSF005963">
    <property type="entry name" value="Lipoyl_synth"/>
    <property type="match status" value="1"/>
</dbReference>
<dbReference type="SFLD" id="SFLDF00271">
    <property type="entry name" value="lipoyl_synthase"/>
    <property type="match status" value="1"/>
</dbReference>
<dbReference type="SFLD" id="SFLDG01058">
    <property type="entry name" value="lipoyl_synthase_like"/>
    <property type="match status" value="1"/>
</dbReference>
<dbReference type="SMART" id="SM00729">
    <property type="entry name" value="Elp3"/>
    <property type="match status" value="1"/>
</dbReference>
<dbReference type="SUPFAM" id="SSF102114">
    <property type="entry name" value="Radical SAM enzymes"/>
    <property type="match status" value="1"/>
</dbReference>
<dbReference type="PROSITE" id="PS51918">
    <property type="entry name" value="RADICAL_SAM"/>
    <property type="match status" value="1"/>
</dbReference>
<organism>
    <name type="scientific">Methylorubrum extorquens (strain CM4 / NCIMB 13688)</name>
    <name type="common">Methylobacterium extorquens</name>
    <dbReference type="NCBI Taxonomy" id="440085"/>
    <lineage>
        <taxon>Bacteria</taxon>
        <taxon>Pseudomonadati</taxon>
        <taxon>Pseudomonadota</taxon>
        <taxon>Alphaproteobacteria</taxon>
        <taxon>Hyphomicrobiales</taxon>
        <taxon>Methylobacteriaceae</taxon>
        <taxon>Methylorubrum</taxon>
    </lineage>
</organism>
<gene>
    <name evidence="1" type="primary">lipA</name>
    <name type="ordered locus">Mchl_3027</name>
</gene>
<protein>
    <recommendedName>
        <fullName evidence="1">Lipoyl synthase</fullName>
        <ecNumber evidence="1">2.8.1.8</ecNumber>
    </recommendedName>
    <alternativeName>
        <fullName evidence="1">Lip-syn</fullName>
        <shortName evidence="1">LS</shortName>
    </alternativeName>
    <alternativeName>
        <fullName evidence="1">Lipoate synthase</fullName>
    </alternativeName>
    <alternativeName>
        <fullName evidence="1">Lipoic acid synthase</fullName>
    </alternativeName>
    <alternativeName>
        <fullName evidence="1">Sulfur insertion protein LipA</fullName>
    </alternativeName>
</protein>
<sequence length="339" mass="37387">MAVVLDLLNKDTRPKLDAPARPRHPEKAHRPDTAIQRKPDWIRVKAPGSKLWAETKDIVRANNLVTVCEEAGCPNIGECWEKRHATFMIMGDTCTRACSFCNVRTGLPAALDEAEPEKVAEAVAKLGLHHVVVTSVDRDDLKDGGAEHFSRTIAAIRRASPGTTVEILTPDFLRKPGALEVVVAAKPDVFNHNMETVPGKYVTVRPGARYFHSVRLLQRVKELDPTIFTKSGIMVGLGEERNEVVQLMDDLRSAEVDFLTIGQYLQPTRKHHEVVRFVPPDEFKAYETTAYAKGFLLVSATPLTRSSHHAGEDFARLKAARLAKLGPAPVAASIRAVNA</sequence>
<evidence type="ECO:0000255" key="1">
    <source>
        <dbReference type="HAMAP-Rule" id="MF_00206"/>
    </source>
</evidence>
<evidence type="ECO:0000255" key="2">
    <source>
        <dbReference type="PROSITE-ProRule" id="PRU01266"/>
    </source>
</evidence>
<evidence type="ECO:0000256" key="3">
    <source>
        <dbReference type="SAM" id="MobiDB-lite"/>
    </source>
</evidence>
<reference key="1">
    <citation type="submission" date="2008-12" db="EMBL/GenBank/DDBJ databases">
        <title>Complete sequence of chromosome of Methylobacterium chloromethanicum CM4.</title>
        <authorList>
            <consortium name="US DOE Joint Genome Institute"/>
            <person name="Lucas S."/>
            <person name="Copeland A."/>
            <person name="Lapidus A."/>
            <person name="Glavina del Rio T."/>
            <person name="Dalin E."/>
            <person name="Tice H."/>
            <person name="Bruce D."/>
            <person name="Goodwin L."/>
            <person name="Pitluck S."/>
            <person name="Chertkov O."/>
            <person name="Brettin T."/>
            <person name="Detter J.C."/>
            <person name="Han C."/>
            <person name="Larimer F."/>
            <person name="Land M."/>
            <person name="Hauser L."/>
            <person name="Kyrpides N."/>
            <person name="Mikhailova N."/>
            <person name="Marx C."/>
            <person name="Richardson P."/>
        </authorList>
    </citation>
    <scope>NUCLEOTIDE SEQUENCE [LARGE SCALE GENOMIC DNA]</scope>
    <source>
        <strain>CM4 / NCIMB 13688</strain>
    </source>
</reference>
<comment type="function">
    <text evidence="1">Catalyzes the radical-mediated insertion of two sulfur atoms into the C-6 and C-8 positions of the octanoyl moiety bound to the lipoyl domains of lipoate-dependent enzymes, thereby converting the octanoylated domains into lipoylated derivatives.</text>
</comment>
<comment type="catalytic activity">
    <reaction evidence="1">
        <text>[[Fe-S] cluster scaffold protein carrying a second [4Fe-4S](2+) cluster] + N(6)-octanoyl-L-lysyl-[protein] + 2 oxidized [2Fe-2S]-[ferredoxin] + 2 S-adenosyl-L-methionine + 4 H(+) = [[Fe-S] cluster scaffold protein] + N(6)-[(R)-dihydrolipoyl]-L-lysyl-[protein] + 4 Fe(3+) + 2 hydrogen sulfide + 2 5'-deoxyadenosine + 2 L-methionine + 2 reduced [2Fe-2S]-[ferredoxin]</text>
        <dbReference type="Rhea" id="RHEA:16585"/>
        <dbReference type="Rhea" id="RHEA-COMP:9928"/>
        <dbReference type="Rhea" id="RHEA-COMP:10000"/>
        <dbReference type="Rhea" id="RHEA-COMP:10001"/>
        <dbReference type="Rhea" id="RHEA-COMP:10475"/>
        <dbReference type="Rhea" id="RHEA-COMP:14568"/>
        <dbReference type="Rhea" id="RHEA-COMP:14569"/>
        <dbReference type="ChEBI" id="CHEBI:15378"/>
        <dbReference type="ChEBI" id="CHEBI:17319"/>
        <dbReference type="ChEBI" id="CHEBI:29034"/>
        <dbReference type="ChEBI" id="CHEBI:29919"/>
        <dbReference type="ChEBI" id="CHEBI:33722"/>
        <dbReference type="ChEBI" id="CHEBI:33737"/>
        <dbReference type="ChEBI" id="CHEBI:33738"/>
        <dbReference type="ChEBI" id="CHEBI:57844"/>
        <dbReference type="ChEBI" id="CHEBI:59789"/>
        <dbReference type="ChEBI" id="CHEBI:78809"/>
        <dbReference type="ChEBI" id="CHEBI:83100"/>
        <dbReference type="EC" id="2.8.1.8"/>
    </reaction>
</comment>
<comment type="cofactor">
    <cofactor evidence="1">
        <name>[4Fe-4S] cluster</name>
        <dbReference type="ChEBI" id="CHEBI:49883"/>
    </cofactor>
    <text evidence="1">Binds 2 [4Fe-4S] clusters per subunit. One cluster is coordinated with 3 cysteines and an exchangeable S-adenosyl-L-methionine.</text>
</comment>
<comment type="pathway">
    <text evidence="1">Protein modification; protein lipoylation via endogenous pathway; protein N(6)-(lipoyl)lysine from octanoyl-[acyl-carrier-protein]: step 2/2.</text>
</comment>
<comment type="subcellular location">
    <subcellularLocation>
        <location evidence="1">Cytoplasm</location>
    </subcellularLocation>
</comment>
<comment type="similarity">
    <text evidence="1">Belongs to the radical SAM superfamily. Lipoyl synthase family.</text>
</comment>
<keyword id="KW-0004">4Fe-4S</keyword>
<keyword id="KW-0963">Cytoplasm</keyword>
<keyword id="KW-0408">Iron</keyword>
<keyword id="KW-0411">Iron-sulfur</keyword>
<keyword id="KW-0479">Metal-binding</keyword>
<keyword id="KW-0949">S-adenosyl-L-methionine</keyword>
<keyword id="KW-0808">Transferase</keyword>
<name>LIPA_METC4</name>
<proteinExistence type="inferred from homology"/>
<accession>B7KRC9</accession>
<feature type="chain" id="PRO_1000124638" description="Lipoyl synthase">
    <location>
        <begin position="1"/>
        <end position="339"/>
    </location>
</feature>
<feature type="domain" description="Radical SAM core" evidence="2">
    <location>
        <begin position="80"/>
        <end position="296"/>
    </location>
</feature>
<feature type="region of interest" description="Disordered" evidence="3">
    <location>
        <begin position="13"/>
        <end position="35"/>
    </location>
</feature>
<feature type="binding site" evidence="1">
    <location>
        <position position="68"/>
    </location>
    <ligand>
        <name>[4Fe-4S] cluster</name>
        <dbReference type="ChEBI" id="CHEBI:49883"/>
        <label>1</label>
    </ligand>
</feature>
<feature type="binding site" evidence="1">
    <location>
        <position position="73"/>
    </location>
    <ligand>
        <name>[4Fe-4S] cluster</name>
        <dbReference type="ChEBI" id="CHEBI:49883"/>
        <label>1</label>
    </ligand>
</feature>
<feature type="binding site" evidence="1">
    <location>
        <position position="79"/>
    </location>
    <ligand>
        <name>[4Fe-4S] cluster</name>
        <dbReference type="ChEBI" id="CHEBI:49883"/>
        <label>1</label>
    </ligand>
</feature>
<feature type="binding site" evidence="1">
    <location>
        <position position="94"/>
    </location>
    <ligand>
        <name>[4Fe-4S] cluster</name>
        <dbReference type="ChEBI" id="CHEBI:49883"/>
        <label>2</label>
        <note>4Fe-4S-S-AdoMet</note>
    </ligand>
</feature>
<feature type="binding site" evidence="1">
    <location>
        <position position="98"/>
    </location>
    <ligand>
        <name>[4Fe-4S] cluster</name>
        <dbReference type="ChEBI" id="CHEBI:49883"/>
        <label>2</label>
        <note>4Fe-4S-S-AdoMet</note>
    </ligand>
</feature>
<feature type="binding site" evidence="1">
    <location>
        <position position="101"/>
    </location>
    <ligand>
        <name>[4Fe-4S] cluster</name>
        <dbReference type="ChEBI" id="CHEBI:49883"/>
        <label>2</label>
        <note>4Fe-4S-S-AdoMet</note>
    </ligand>
</feature>
<feature type="binding site" evidence="1">
    <location>
        <position position="307"/>
    </location>
    <ligand>
        <name>[4Fe-4S] cluster</name>
        <dbReference type="ChEBI" id="CHEBI:49883"/>
        <label>1</label>
    </ligand>
</feature>